<feature type="chain" id="PRO_0000333859" description="Aryl hydrocarbon receptor repressor">
    <location>
        <begin position="1"/>
        <end position="701"/>
    </location>
</feature>
<feature type="domain" description="bHLH" evidence="4">
    <location>
        <begin position="25"/>
        <end position="78"/>
    </location>
</feature>
<feature type="domain" description="PAS" evidence="3">
    <location>
        <begin position="106"/>
        <end position="176"/>
    </location>
</feature>
<feature type="region of interest" description="Disordered" evidence="5">
    <location>
        <begin position="1"/>
        <end position="38"/>
    </location>
</feature>
<feature type="region of interest" description="Disordered" evidence="5">
    <location>
        <begin position="360"/>
        <end position="389"/>
    </location>
</feature>
<feature type="region of interest" description="Disordered" evidence="5">
    <location>
        <begin position="409"/>
        <end position="436"/>
    </location>
</feature>
<feature type="region of interest" description="Needed for transcriptional repression" evidence="1">
    <location>
        <begin position="555"/>
        <end position="701"/>
    </location>
</feature>
<feature type="compositionally biased region" description="Basic residues" evidence="5">
    <location>
        <begin position="12"/>
        <end position="24"/>
    </location>
</feature>
<feature type="compositionally biased region" description="Basic and acidic residues" evidence="5">
    <location>
        <begin position="365"/>
        <end position="375"/>
    </location>
</feature>
<feature type="compositionally biased region" description="Polar residues" evidence="5">
    <location>
        <begin position="414"/>
        <end position="430"/>
    </location>
</feature>
<feature type="cross-link" description="Glycyl lysine isopeptide (Lys-Gly) (interchain with G-Cter in SUMO2)" evidence="2">
    <location>
        <position position="583"/>
    </location>
</feature>
<feature type="cross-link" description="Glycyl lysine isopeptide (Lys-Gly) (interchain with G-Cter in SUMO2)" evidence="2">
    <location>
        <position position="660"/>
    </location>
</feature>
<accession>Q75NT5</accession>
<comment type="function">
    <text evidence="7">Mediates dioxin toxicity and is involved in regulation of cell growth and differentiation. Represses the transcription activity of AHR by competing with this transcription factor for heterodimer formation with the ARNT and subsequently binding to the xenobiotic response element (XRE) sequence present in the promoter regulatory region of variety of genes. Represses CYP1A1 by binding the XRE sequence and recruiting ANKRA2, HDAC4 and/or HDAC5. Autoregulates its expression by associating with its own XRE site.</text>
</comment>
<comment type="subunit">
    <text evidence="1 2">Interacts with ARNT, ANKRA2, HDAC4 and HDAC5. Interacts with ARNT; forms a heterodimer with ARNT (By similarity).</text>
</comment>
<comment type="subcellular location">
    <subcellularLocation>
        <location>Cytoplasm</location>
    </subcellularLocation>
    <subcellularLocation>
        <location>Nucleus</location>
    </subcellularLocation>
    <text evidence="1">Predominantly in the nuclear compartment. First cytoplasmic, translocates into the nuclear compartment upon interaction with ARNT in the cytoplasmic compartment (By similarity).</text>
</comment>
<comment type="tissue specificity">
    <text evidence="6 7">Highly expressed in testis and weakly expressed in heart and liver. Highly expressed in small intestine and cecum in a male-dominant sexual dimorphic fashion.</text>
</comment>
<comment type="induction">
    <text evidence="6 7">Increased after TCDD exposure in liver. Highly increased after TCDD exposure in kidney, spleen and heart. Up-regulated by 3-MC in small intestine.</text>
</comment>
<reference key="1">
    <citation type="journal article" date="2004" name="Biochem. Biophys. Res. Commun.">
        <title>Primary structure and inducibility by 2,3,7,8-tetrachlorodibenzo-p-dioxin (TCDD) of aryl hydrocarbon receptor repressor in a TCDD-sensitive and a TCDD-resistant rat strain.</title>
        <authorList>
            <person name="Korkalainen M."/>
            <person name="Tuomisto J."/>
            <person name="Pohjanvirta R."/>
        </authorList>
    </citation>
    <scope>NUCLEOTIDE SEQUENCE [MRNA]</scope>
    <scope>TISSUE SPECIFICITY</scope>
    <scope>INDUCTION</scope>
    <source>
        <strain>Long Evans</strain>
    </source>
</reference>
<reference key="2">
    <citation type="journal article" date="2006" name="Biol. Pharm. Bull.">
        <title>Primary structure and organ-specific expression of the rat aryl hydrocarbon receptor repressor gene.</title>
        <authorList>
            <person name="Nishihashi H."/>
            <person name="Kanno Y."/>
            <person name="Tomuro K."/>
            <person name="Nakahama T."/>
            <person name="Inouye Y."/>
        </authorList>
    </citation>
    <scope>NUCLEOTIDE SEQUENCE [MRNA]</scope>
    <scope>FUNCTION</scope>
    <scope>TISSUE SPECIFICITY</scope>
    <scope>INDUCTION</scope>
    <source>
        <strain>Wistar</strain>
        <tissue>Heart</tissue>
    </source>
</reference>
<name>AHRR_RAT</name>
<gene>
    <name type="primary">Ahrr</name>
</gene>
<dbReference type="EMBL" id="AY367561">
    <property type="protein sequence ID" value="AAR15509.1"/>
    <property type="molecule type" value="mRNA"/>
</dbReference>
<dbReference type="EMBL" id="AB174900">
    <property type="protein sequence ID" value="BAD13341.1"/>
    <property type="molecule type" value="mRNA"/>
</dbReference>
<dbReference type="RefSeq" id="NP_001019456.1">
    <property type="nucleotide sequence ID" value="NM_001024285.1"/>
</dbReference>
<dbReference type="SMR" id="Q75NT5"/>
<dbReference type="FunCoup" id="Q75NT5">
    <property type="interactions" value="47"/>
</dbReference>
<dbReference type="STRING" id="10116.ENSRNOP00000019806"/>
<dbReference type="iPTMnet" id="Q75NT5"/>
<dbReference type="PhosphoSitePlus" id="Q75NT5"/>
<dbReference type="PaxDb" id="10116-ENSRNOP00000019806"/>
<dbReference type="Ensembl" id="ENSRNOT00000019806.4">
    <property type="protein sequence ID" value="ENSRNOP00000019806.2"/>
    <property type="gene ID" value="ENSRNOG00000014721.5"/>
</dbReference>
<dbReference type="GeneID" id="498999"/>
<dbReference type="KEGG" id="rno:498999"/>
<dbReference type="UCSC" id="RGD:1559857">
    <property type="organism name" value="rat"/>
</dbReference>
<dbReference type="AGR" id="RGD:1559857"/>
<dbReference type="CTD" id="57491"/>
<dbReference type="RGD" id="1559857">
    <property type="gene designation" value="Ahrr"/>
</dbReference>
<dbReference type="eggNOG" id="KOG3560">
    <property type="taxonomic scope" value="Eukaryota"/>
</dbReference>
<dbReference type="GeneTree" id="ENSGT00940000154486"/>
<dbReference type="HOGENOM" id="CLU_023661_0_0_1"/>
<dbReference type="InParanoid" id="Q75NT5"/>
<dbReference type="OMA" id="ECFMQEE"/>
<dbReference type="OrthoDB" id="44205at9989"/>
<dbReference type="PhylomeDB" id="Q75NT5"/>
<dbReference type="TreeFam" id="TF352074"/>
<dbReference type="Reactome" id="R-RNO-211945">
    <property type="pathway name" value="Phase I - Functionalization of compounds"/>
</dbReference>
<dbReference type="Reactome" id="R-RNO-211976">
    <property type="pathway name" value="Endogenous sterols"/>
</dbReference>
<dbReference type="Reactome" id="R-RNO-211981">
    <property type="pathway name" value="Xenobiotics"/>
</dbReference>
<dbReference type="Reactome" id="R-RNO-8937144">
    <property type="pathway name" value="Aryl hydrocarbon receptor signalling"/>
</dbReference>
<dbReference type="PRO" id="PR:Q75NT5"/>
<dbReference type="Proteomes" id="UP000002494">
    <property type="component" value="Chromosome 1"/>
</dbReference>
<dbReference type="Bgee" id="ENSRNOG00000014721">
    <property type="expression patterns" value="Expressed in jejunum and 6 other cell types or tissues"/>
</dbReference>
<dbReference type="GO" id="GO:0034751">
    <property type="term" value="C:aryl hydrocarbon receptor complex"/>
    <property type="evidence" value="ECO:0000318"/>
    <property type="project" value="GO_Central"/>
</dbReference>
<dbReference type="GO" id="GO:0005737">
    <property type="term" value="C:cytoplasm"/>
    <property type="evidence" value="ECO:0007669"/>
    <property type="project" value="UniProtKB-SubCell"/>
</dbReference>
<dbReference type="GO" id="GO:0005634">
    <property type="term" value="C:nucleus"/>
    <property type="evidence" value="ECO:0000266"/>
    <property type="project" value="RGD"/>
</dbReference>
<dbReference type="GO" id="GO:0004879">
    <property type="term" value="F:nuclear receptor activity"/>
    <property type="evidence" value="ECO:0000318"/>
    <property type="project" value="GO_Central"/>
</dbReference>
<dbReference type="GO" id="GO:0046983">
    <property type="term" value="F:protein dimerization activity"/>
    <property type="evidence" value="ECO:0007669"/>
    <property type="project" value="InterPro"/>
</dbReference>
<dbReference type="GO" id="GO:0000976">
    <property type="term" value="F:transcription cis-regulatory region binding"/>
    <property type="evidence" value="ECO:0000318"/>
    <property type="project" value="GO_Central"/>
</dbReference>
<dbReference type="GO" id="GO:0045892">
    <property type="term" value="P:negative regulation of DNA-templated transcription"/>
    <property type="evidence" value="ECO:0000266"/>
    <property type="project" value="RGD"/>
</dbReference>
<dbReference type="GO" id="GO:0000122">
    <property type="term" value="P:negative regulation of transcription by RNA polymerase II"/>
    <property type="evidence" value="ECO:0000266"/>
    <property type="project" value="RGD"/>
</dbReference>
<dbReference type="GO" id="GO:0046209">
    <property type="term" value="P:nitric oxide metabolic process"/>
    <property type="evidence" value="ECO:0000270"/>
    <property type="project" value="RGD"/>
</dbReference>
<dbReference type="GO" id="GO:0033235">
    <property type="term" value="P:positive regulation of protein sumoylation"/>
    <property type="evidence" value="ECO:0000266"/>
    <property type="project" value="RGD"/>
</dbReference>
<dbReference type="GO" id="GO:0006357">
    <property type="term" value="P:regulation of transcription by RNA polymerase II"/>
    <property type="evidence" value="ECO:0000318"/>
    <property type="project" value="GO_Central"/>
</dbReference>
<dbReference type="GO" id="GO:0006805">
    <property type="term" value="P:xenobiotic metabolic process"/>
    <property type="evidence" value="ECO:0007669"/>
    <property type="project" value="InterPro"/>
</dbReference>
<dbReference type="CDD" id="cd11435">
    <property type="entry name" value="bHLH-PAS_AhRR"/>
    <property type="match status" value="1"/>
</dbReference>
<dbReference type="CDD" id="cd00130">
    <property type="entry name" value="PAS"/>
    <property type="match status" value="1"/>
</dbReference>
<dbReference type="FunFam" id="3.30.450.20:FF:000056">
    <property type="entry name" value="aryl hydrocarbon receptor repressor"/>
    <property type="match status" value="1"/>
</dbReference>
<dbReference type="FunFam" id="4.10.280.10:FF:000041">
    <property type="entry name" value="aryl hydrocarbon receptor repressor"/>
    <property type="match status" value="1"/>
</dbReference>
<dbReference type="Gene3D" id="4.10.280.10">
    <property type="entry name" value="Helix-loop-helix DNA-binding domain"/>
    <property type="match status" value="1"/>
</dbReference>
<dbReference type="Gene3D" id="3.30.450.20">
    <property type="entry name" value="PAS domain"/>
    <property type="match status" value="1"/>
</dbReference>
<dbReference type="InterPro" id="IPR039091">
    <property type="entry name" value="AHR/AHRR"/>
</dbReference>
<dbReference type="InterPro" id="IPR039092">
    <property type="entry name" value="AHRR_bHLH"/>
</dbReference>
<dbReference type="InterPro" id="IPR011598">
    <property type="entry name" value="bHLH_dom"/>
</dbReference>
<dbReference type="InterPro" id="IPR036638">
    <property type="entry name" value="HLH_DNA-bd_sf"/>
</dbReference>
<dbReference type="InterPro" id="IPR000014">
    <property type="entry name" value="PAS"/>
</dbReference>
<dbReference type="InterPro" id="IPR035965">
    <property type="entry name" value="PAS-like_dom_sf"/>
</dbReference>
<dbReference type="InterPro" id="IPR013767">
    <property type="entry name" value="PAS_fold"/>
</dbReference>
<dbReference type="PANTHER" id="PTHR10649">
    <property type="entry name" value="ARYL HYDROCARBON RECEPTOR"/>
    <property type="match status" value="1"/>
</dbReference>
<dbReference type="PANTHER" id="PTHR10649:SF3">
    <property type="entry name" value="ARYL HYDROCARBON RECEPTOR REPRESSOR"/>
    <property type="match status" value="1"/>
</dbReference>
<dbReference type="Pfam" id="PF00010">
    <property type="entry name" value="HLH"/>
    <property type="match status" value="1"/>
</dbReference>
<dbReference type="Pfam" id="PF00989">
    <property type="entry name" value="PAS"/>
    <property type="match status" value="1"/>
</dbReference>
<dbReference type="SMART" id="SM00353">
    <property type="entry name" value="HLH"/>
    <property type="match status" value="1"/>
</dbReference>
<dbReference type="SMART" id="SM00091">
    <property type="entry name" value="PAS"/>
    <property type="match status" value="1"/>
</dbReference>
<dbReference type="SUPFAM" id="SSF47459">
    <property type="entry name" value="HLH, helix-loop-helix DNA-binding domain"/>
    <property type="match status" value="1"/>
</dbReference>
<dbReference type="SUPFAM" id="SSF55785">
    <property type="entry name" value="PYP-like sensor domain (PAS domain)"/>
    <property type="match status" value="1"/>
</dbReference>
<dbReference type="PROSITE" id="PS50888">
    <property type="entry name" value="BHLH"/>
    <property type="match status" value="1"/>
</dbReference>
<dbReference type="PROSITE" id="PS50112">
    <property type="entry name" value="PAS"/>
    <property type="match status" value="1"/>
</dbReference>
<proteinExistence type="evidence at transcript level"/>
<sequence length="701" mass="77799">MMIPSGECTYAGRKRRKPIQKRRLTMGTEKSNPSKRHRDRLNTELDHLASLLPFSPDIISKLDKLSVLRLSVSYLRVKSFFQALQETCVWSAPALSPEDHSSRGFPVQEGRLLLESLNGFALVVSAEGMIFYASATIVDYLGFHQTDVMHQNIYDYIHVDDRQDFCRQLHWAMDPPQVVFGQSPHADTDNTVLGKLLRAQEGGKGLPSEYSAFLTRCFICRVRCLLDSTSGFLTMQFQGKLKFLFGQKKKTPSGTALPPRLSLFCIVAPVLPSVTEMKMKSAFLKAKHRADIVVTMDSRAKAVTSLCESELHPKLNYLAGRSNGENVISLFRGQTDRSHWTRALARSSCLCLRGGPDLLDPKGTSGDREEDDQKHILRRSPGARGQREMHKYSYGLETPVHLRHLDWSTEQRSQEGTTKLTRQPSKSEPSTCLVPHGSCVPYPGSQGMFSASNMASFRESLDHPTGTYCSQMNRPLPDIHQGQVDPSTCHIPQGSLGSRIPLSGMQCFTARGFSTEDAKLPSLPVNIGTPCNPVLSLEVPIKMENESGSQDIVEASTTSCVWLGTGDMTRRHLVGFPARMHLKTEPDYRQQVCTPHRGHGILGTNPHSRDTVGSCREHAPLYSAHCTCLSPEPPHHLFMCSHSESQHPSLDQDCRAPIVKREPLDSPSWAAPGHVTVPRMFPKNASITVIPSKGSDGIFLP</sequence>
<keyword id="KW-0963">Cytoplasm</keyword>
<keyword id="KW-0238">DNA-binding</keyword>
<keyword id="KW-1017">Isopeptide bond</keyword>
<keyword id="KW-0539">Nucleus</keyword>
<keyword id="KW-1185">Reference proteome</keyword>
<keyword id="KW-0804">Transcription</keyword>
<keyword id="KW-0805">Transcription regulation</keyword>
<keyword id="KW-0832">Ubl conjugation</keyword>
<protein>
    <recommendedName>
        <fullName>Aryl hydrocarbon receptor repressor</fullName>
        <shortName>AhR repressor</shortName>
        <shortName>AhRR</shortName>
    </recommendedName>
</protein>
<evidence type="ECO:0000250" key="1"/>
<evidence type="ECO:0000250" key="2">
    <source>
        <dbReference type="UniProtKB" id="A9YTQ3"/>
    </source>
</evidence>
<evidence type="ECO:0000255" key="3">
    <source>
        <dbReference type="PROSITE-ProRule" id="PRU00140"/>
    </source>
</evidence>
<evidence type="ECO:0000255" key="4">
    <source>
        <dbReference type="PROSITE-ProRule" id="PRU00981"/>
    </source>
</evidence>
<evidence type="ECO:0000256" key="5">
    <source>
        <dbReference type="SAM" id="MobiDB-lite"/>
    </source>
</evidence>
<evidence type="ECO:0000269" key="6">
    <source>
    </source>
</evidence>
<evidence type="ECO:0000269" key="7">
    <source>
    </source>
</evidence>
<organism>
    <name type="scientific">Rattus norvegicus</name>
    <name type="common">Rat</name>
    <dbReference type="NCBI Taxonomy" id="10116"/>
    <lineage>
        <taxon>Eukaryota</taxon>
        <taxon>Metazoa</taxon>
        <taxon>Chordata</taxon>
        <taxon>Craniata</taxon>
        <taxon>Vertebrata</taxon>
        <taxon>Euteleostomi</taxon>
        <taxon>Mammalia</taxon>
        <taxon>Eutheria</taxon>
        <taxon>Euarchontoglires</taxon>
        <taxon>Glires</taxon>
        <taxon>Rodentia</taxon>
        <taxon>Myomorpha</taxon>
        <taxon>Muroidea</taxon>
        <taxon>Muridae</taxon>
        <taxon>Murinae</taxon>
        <taxon>Rattus</taxon>
    </lineage>
</organism>